<accession>Q00967</accession>
<feature type="chain" id="PRO_0000222079" description="Virion-associated protein">
    <location>
        <begin position="1"/>
        <end position="129"/>
    </location>
</feature>
<feature type="region of interest" description="Capsid binding" evidence="1">
    <location>
        <begin position="122"/>
        <end position="129"/>
    </location>
</feature>
<feature type="coiled-coil region" evidence="1">
    <location>
        <begin position="1"/>
        <end position="31"/>
    </location>
</feature>
<feature type="coiled-coil region" evidence="1">
    <location>
        <begin position="38"/>
        <end position="59"/>
    </location>
</feature>
<feature type="disulfide bond" description="Interchain (with C-62 in multimeric partner 1)" evidence="1">
    <location>
        <position position="60"/>
    </location>
</feature>
<feature type="disulfide bond" description="Interchain (with C-60 in multimeric partner 2)" evidence="1">
    <location>
        <position position="62"/>
    </location>
</feature>
<name>VAP_CAMVN</name>
<sequence length="129" mass="14170">MANLNQIQKEVSEILSDQKSMKSDIKAILEMLGSQNPIKESLEAVAAKIVNDLTKLINDCPCNKEILEALGNQPKEQLIEQPKEKGKGLNLGKYSYPNYGVGNEELGSSGNPKALTWPFKAPAGWPNQF</sequence>
<reference key="1">
    <citation type="journal article" date="1992" name="Plant Physiol.">
        <title>Nucleotide sequence of cauliflower mosaic virus isolate NY8153.</title>
        <authorList>
            <person name="Chenault K.D."/>
            <person name="Steffens D.L."/>
            <person name="Melcher U.K."/>
        </authorList>
    </citation>
    <scope>NUCLEOTIDE SEQUENCE [GENOMIC DNA]</scope>
</reference>
<protein>
    <recommendedName>
        <fullName>Virion-associated protein</fullName>
        <shortName>Vap</shortName>
    </recommendedName>
    <alternativeName>
        <fullName>Protein 3</fullName>
        <shortName>P3</shortName>
    </alternativeName>
</protein>
<gene>
    <name type="ORF">ORF III</name>
</gene>
<organismHost>
    <name type="scientific">Arabidopsis thaliana</name>
    <name type="common">Mouse-ear cress</name>
    <dbReference type="NCBI Taxonomy" id="3702"/>
</organismHost>
<organismHost>
    <name type="scientific">Brassica</name>
    <dbReference type="NCBI Taxonomy" id="3705"/>
</organismHost>
<organismHost>
    <name type="scientific">Raphanus</name>
    <dbReference type="NCBI Taxonomy" id="3725"/>
</organismHost>
<keyword id="KW-0175">Coiled coil</keyword>
<keyword id="KW-1015">Disulfide bond</keyword>
<keyword id="KW-1031">Host cell junction</keyword>
<keyword id="KW-0946">Virion</keyword>
<proteinExistence type="inferred from homology"/>
<comment type="function">
    <text evidence="1">Plays a role in virus cell-to-cell and plant-to-plant transmission. Interacts with virion icosahedral capsid and movement protein, thereby facilitating virion cell-to-cell transmission through plasmodesmata opened by viral movement protein. Also interacts with aphid transmission factor, attaching the virion to aphid stylet when the animal feeds on an virus infected plant. Aphid saliva may later detach the virion, inducing release of infectious particles when the animal feeds on a new plant (By similarity).</text>
</comment>
<comment type="subunit">
    <text evidence="1">Homotetramer, through coiled-coil domain. Homotrimer when interacts with icosehadral capsid. Interacts with capsid protein, and with Movement protein (By similarity).</text>
</comment>
<comment type="subcellular location">
    <subcellularLocation>
        <location evidence="1">Virion</location>
    </subcellularLocation>
    <subcellularLocation>
        <location>Host cell junction</location>
        <location>Host plasmodesma</location>
    </subcellularLocation>
</comment>
<comment type="similarity">
    <text evidence="2">Belongs to the caulimovirus ORF III family.</text>
</comment>
<dbReference type="EMBL" id="M90541">
    <property type="protein sequence ID" value="AAA46356.1"/>
    <property type="molecule type" value="Genomic_DNA"/>
</dbReference>
<dbReference type="SMR" id="Q00967"/>
<dbReference type="Proteomes" id="UP000008441">
    <property type="component" value="Genome"/>
</dbReference>
<dbReference type="GO" id="GO:0044219">
    <property type="term" value="C:host cell plasmodesma"/>
    <property type="evidence" value="ECO:0007669"/>
    <property type="project" value="UniProtKB-SubCell"/>
</dbReference>
<dbReference type="GO" id="GO:0044423">
    <property type="term" value="C:virion component"/>
    <property type="evidence" value="ECO:0007669"/>
    <property type="project" value="UniProtKB-KW"/>
</dbReference>
<dbReference type="GO" id="GO:0003677">
    <property type="term" value="F:DNA binding"/>
    <property type="evidence" value="ECO:0007669"/>
    <property type="project" value="InterPro"/>
</dbReference>
<dbReference type="Gene3D" id="6.10.250.630">
    <property type="match status" value="1"/>
</dbReference>
<dbReference type="InterPro" id="IPR004986">
    <property type="entry name" value="Caulimo_virion-assoc"/>
</dbReference>
<dbReference type="Pfam" id="PF03310">
    <property type="entry name" value="Cauli_DNA-bind"/>
    <property type="match status" value="1"/>
</dbReference>
<evidence type="ECO:0000250" key="1"/>
<evidence type="ECO:0000305" key="2"/>
<organism>
    <name type="scientific">Cauliflower mosaic virus (strain NY8153)</name>
    <name type="common">CaMV</name>
    <dbReference type="NCBI Taxonomy" id="31557"/>
    <lineage>
        <taxon>Viruses</taxon>
        <taxon>Riboviria</taxon>
        <taxon>Pararnavirae</taxon>
        <taxon>Artverviricota</taxon>
        <taxon>Revtraviricetes</taxon>
        <taxon>Ortervirales</taxon>
        <taxon>Caulimoviridae</taxon>
        <taxon>Caulimovirus</taxon>
        <taxon>Caulimovirus tessellobrassicae</taxon>
    </lineage>
</organism>